<feature type="chain" id="PRO_0000225730" description="Large ribosomal subunit protein bL32">
    <location>
        <begin position="1"/>
        <end position="56"/>
    </location>
</feature>
<feature type="region of interest" description="Disordered" evidence="2">
    <location>
        <begin position="1"/>
        <end position="56"/>
    </location>
</feature>
<feature type="compositionally biased region" description="Basic residues" evidence="2">
    <location>
        <begin position="1"/>
        <end position="16"/>
    </location>
</feature>
<protein>
    <recommendedName>
        <fullName evidence="1">Large ribosomal subunit protein bL32</fullName>
    </recommendedName>
    <alternativeName>
        <fullName evidence="3">50S ribosomal protein L32</fullName>
    </alternativeName>
</protein>
<proteinExistence type="inferred from homology"/>
<sequence>MAVQKSKKSRSRRDMRRSHDAIDGPTLSVDSTTGETHRRHHVTADGYYKGRKVVNK</sequence>
<keyword id="KW-1185">Reference proteome</keyword>
<keyword id="KW-0687">Ribonucleoprotein</keyword>
<keyword id="KW-0689">Ribosomal protein</keyword>
<gene>
    <name evidence="1" type="primary">rpmF</name>
    <name type="ordered locus">IL1344</name>
</gene>
<dbReference type="EMBL" id="AE017340">
    <property type="protein sequence ID" value="AAV82184.1"/>
    <property type="molecule type" value="Genomic_DNA"/>
</dbReference>
<dbReference type="RefSeq" id="WP_011234590.1">
    <property type="nucleotide sequence ID" value="NC_006512.1"/>
</dbReference>
<dbReference type="SMR" id="Q5QZ37"/>
<dbReference type="STRING" id="283942.IL1344"/>
<dbReference type="GeneID" id="78252017"/>
<dbReference type="KEGG" id="ilo:IL1344"/>
<dbReference type="eggNOG" id="COG0333">
    <property type="taxonomic scope" value="Bacteria"/>
</dbReference>
<dbReference type="HOGENOM" id="CLU_129084_2_1_6"/>
<dbReference type="OrthoDB" id="9801927at2"/>
<dbReference type="Proteomes" id="UP000001171">
    <property type="component" value="Chromosome"/>
</dbReference>
<dbReference type="GO" id="GO:0015934">
    <property type="term" value="C:large ribosomal subunit"/>
    <property type="evidence" value="ECO:0007669"/>
    <property type="project" value="InterPro"/>
</dbReference>
<dbReference type="GO" id="GO:0003735">
    <property type="term" value="F:structural constituent of ribosome"/>
    <property type="evidence" value="ECO:0007669"/>
    <property type="project" value="InterPro"/>
</dbReference>
<dbReference type="GO" id="GO:0006412">
    <property type="term" value="P:translation"/>
    <property type="evidence" value="ECO:0007669"/>
    <property type="project" value="UniProtKB-UniRule"/>
</dbReference>
<dbReference type="Gene3D" id="1.20.5.640">
    <property type="entry name" value="Single helix bin"/>
    <property type="match status" value="1"/>
</dbReference>
<dbReference type="HAMAP" id="MF_00340">
    <property type="entry name" value="Ribosomal_bL32"/>
    <property type="match status" value="1"/>
</dbReference>
<dbReference type="InterPro" id="IPR002677">
    <property type="entry name" value="Ribosomal_bL32"/>
</dbReference>
<dbReference type="InterPro" id="IPR044957">
    <property type="entry name" value="Ribosomal_bL32_bact"/>
</dbReference>
<dbReference type="InterPro" id="IPR011332">
    <property type="entry name" value="Ribosomal_zn-bd"/>
</dbReference>
<dbReference type="NCBIfam" id="TIGR01031">
    <property type="entry name" value="rpmF_bact"/>
    <property type="match status" value="1"/>
</dbReference>
<dbReference type="PANTHER" id="PTHR35534">
    <property type="entry name" value="50S RIBOSOMAL PROTEIN L32"/>
    <property type="match status" value="1"/>
</dbReference>
<dbReference type="PANTHER" id="PTHR35534:SF1">
    <property type="entry name" value="LARGE RIBOSOMAL SUBUNIT PROTEIN BL32"/>
    <property type="match status" value="1"/>
</dbReference>
<dbReference type="Pfam" id="PF01783">
    <property type="entry name" value="Ribosomal_L32p"/>
    <property type="match status" value="1"/>
</dbReference>
<dbReference type="SUPFAM" id="SSF57829">
    <property type="entry name" value="Zn-binding ribosomal proteins"/>
    <property type="match status" value="1"/>
</dbReference>
<evidence type="ECO:0000255" key="1">
    <source>
        <dbReference type="HAMAP-Rule" id="MF_00340"/>
    </source>
</evidence>
<evidence type="ECO:0000256" key="2">
    <source>
        <dbReference type="SAM" id="MobiDB-lite"/>
    </source>
</evidence>
<evidence type="ECO:0000305" key="3"/>
<comment type="similarity">
    <text evidence="1">Belongs to the bacterial ribosomal protein bL32 family.</text>
</comment>
<accession>Q5QZ37</accession>
<reference key="1">
    <citation type="journal article" date="2004" name="Proc. Natl. Acad. Sci. U.S.A.">
        <title>Genome sequence of the deep-sea gamma-proteobacterium Idiomarina loihiensis reveals amino acid fermentation as a source of carbon and energy.</title>
        <authorList>
            <person name="Hou S."/>
            <person name="Saw J.H."/>
            <person name="Lee K.S."/>
            <person name="Freitas T.A."/>
            <person name="Belisle C."/>
            <person name="Kawarabayasi Y."/>
            <person name="Donachie S.P."/>
            <person name="Pikina A."/>
            <person name="Galperin M.Y."/>
            <person name="Koonin E.V."/>
            <person name="Makarova K.S."/>
            <person name="Omelchenko M.V."/>
            <person name="Sorokin A."/>
            <person name="Wolf Y.I."/>
            <person name="Li Q.X."/>
            <person name="Keum Y.S."/>
            <person name="Campbell S."/>
            <person name="Denery J."/>
            <person name="Aizawa S."/>
            <person name="Shibata S."/>
            <person name="Malahoff A."/>
            <person name="Alam M."/>
        </authorList>
    </citation>
    <scope>NUCLEOTIDE SEQUENCE [LARGE SCALE GENOMIC DNA]</scope>
    <source>
        <strain>ATCC BAA-735 / DSM 15497 / L2-TR</strain>
    </source>
</reference>
<organism>
    <name type="scientific">Idiomarina loihiensis (strain ATCC BAA-735 / DSM 15497 / L2-TR)</name>
    <dbReference type="NCBI Taxonomy" id="283942"/>
    <lineage>
        <taxon>Bacteria</taxon>
        <taxon>Pseudomonadati</taxon>
        <taxon>Pseudomonadota</taxon>
        <taxon>Gammaproteobacteria</taxon>
        <taxon>Alteromonadales</taxon>
        <taxon>Idiomarinaceae</taxon>
        <taxon>Idiomarina</taxon>
    </lineage>
</organism>
<name>RL32_IDILO</name>